<accession>O17586</accession>
<feature type="chain" id="PRO_0000124133" description="Proteasome subunit alpha type-6">
    <location>
        <begin position="1"/>
        <end position="246"/>
    </location>
</feature>
<dbReference type="EMBL" id="Z81035">
    <property type="protein sequence ID" value="CAB02738.1"/>
    <property type="molecule type" value="Genomic_DNA"/>
</dbReference>
<dbReference type="PIR" id="T19320">
    <property type="entry name" value="T19320"/>
</dbReference>
<dbReference type="RefSeq" id="NP_506571.1">
    <property type="nucleotide sequence ID" value="NM_074170.7"/>
</dbReference>
<dbReference type="SMR" id="O17586"/>
<dbReference type="BioGRID" id="44945">
    <property type="interactions" value="51"/>
</dbReference>
<dbReference type="FunCoup" id="O17586">
    <property type="interactions" value="2419"/>
</dbReference>
<dbReference type="IntAct" id="O17586">
    <property type="interactions" value="7"/>
</dbReference>
<dbReference type="STRING" id="6239.C15H11.7.1"/>
<dbReference type="MEROPS" id="T01.971"/>
<dbReference type="iPTMnet" id="O17586"/>
<dbReference type="PaxDb" id="6239-C15H11.7"/>
<dbReference type="PeptideAtlas" id="O17586"/>
<dbReference type="EnsemblMetazoa" id="C15H11.7.1">
    <property type="protein sequence ID" value="C15H11.7.1"/>
    <property type="gene ID" value="WBGene00003922"/>
</dbReference>
<dbReference type="GeneID" id="179941"/>
<dbReference type="KEGG" id="cel:CELE_C15H11.7"/>
<dbReference type="UCSC" id="C15H11.7.1">
    <property type="organism name" value="c. elegans"/>
</dbReference>
<dbReference type="AGR" id="WB:WBGene00003922"/>
<dbReference type="CTD" id="179941"/>
<dbReference type="WormBase" id="C15H11.7">
    <property type="protein sequence ID" value="CE08184"/>
    <property type="gene ID" value="WBGene00003922"/>
    <property type="gene designation" value="pas-1"/>
</dbReference>
<dbReference type="eggNOG" id="KOG0182">
    <property type="taxonomic scope" value="Eukaryota"/>
</dbReference>
<dbReference type="GeneTree" id="ENSGT00550000074807"/>
<dbReference type="HOGENOM" id="CLU_035750_4_1_1"/>
<dbReference type="InParanoid" id="O17586"/>
<dbReference type="OMA" id="YGYDMPV"/>
<dbReference type="OrthoDB" id="5835702at2759"/>
<dbReference type="PhylomeDB" id="O17586"/>
<dbReference type="Reactome" id="R-CEL-1234176">
    <property type="pathway name" value="Oxygen-dependent proline hydroxylation of Hypoxia-inducible Factor Alpha"/>
</dbReference>
<dbReference type="Reactome" id="R-CEL-1236978">
    <property type="pathway name" value="Cross-presentation of soluble exogenous antigens (endosomes)"/>
</dbReference>
<dbReference type="Reactome" id="R-CEL-187577">
    <property type="pathway name" value="SCF(Skp2)-mediated degradation of p27/p21"/>
</dbReference>
<dbReference type="Reactome" id="R-CEL-195253">
    <property type="pathway name" value="Degradation of beta-catenin by the destruction complex"/>
</dbReference>
<dbReference type="Reactome" id="R-CEL-349425">
    <property type="pathway name" value="Autodegradation of the E3 ubiquitin ligase COP1"/>
</dbReference>
<dbReference type="Reactome" id="R-CEL-350562">
    <property type="pathway name" value="Regulation of ornithine decarboxylase (ODC)"/>
</dbReference>
<dbReference type="Reactome" id="R-CEL-382556">
    <property type="pathway name" value="ABC-family proteins mediated transport"/>
</dbReference>
<dbReference type="Reactome" id="R-CEL-4608870">
    <property type="pathway name" value="Asymmetric localization of PCP proteins"/>
</dbReference>
<dbReference type="Reactome" id="R-CEL-4641258">
    <property type="pathway name" value="Degradation of DVL"/>
</dbReference>
<dbReference type="Reactome" id="R-CEL-5632684">
    <property type="pathway name" value="Hedgehog 'on' state"/>
</dbReference>
<dbReference type="Reactome" id="R-CEL-5687128">
    <property type="pathway name" value="MAPK6/MAPK4 signaling"/>
</dbReference>
<dbReference type="Reactome" id="R-CEL-5689603">
    <property type="pathway name" value="UCH proteinases"/>
</dbReference>
<dbReference type="Reactome" id="R-CEL-5689880">
    <property type="pathway name" value="Ub-specific processing proteases"/>
</dbReference>
<dbReference type="Reactome" id="R-CEL-68949">
    <property type="pathway name" value="Orc1 removal from chromatin"/>
</dbReference>
<dbReference type="Reactome" id="R-CEL-69017">
    <property type="pathway name" value="CDK-mediated phosphorylation and removal of Cdc6"/>
</dbReference>
<dbReference type="Reactome" id="R-CEL-69601">
    <property type="pathway name" value="Ubiquitin Mediated Degradation of Phosphorylated Cdc25A"/>
</dbReference>
<dbReference type="Reactome" id="R-CEL-75815">
    <property type="pathway name" value="Ubiquitin-dependent degradation of Cyclin D"/>
</dbReference>
<dbReference type="Reactome" id="R-CEL-8854050">
    <property type="pathway name" value="FBXL7 down-regulates AURKA during mitotic entry and in early mitosis"/>
</dbReference>
<dbReference type="Reactome" id="R-CEL-8939902">
    <property type="pathway name" value="Regulation of RUNX2 expression and activity"/>
</dbReference>
<dbReference type="Reactome" id="R-CEL-8941858">
    <property type="pathway name" value="Regulation of RUNX3 expression and activity"/>
</dbReference>
<dbReference type="Reactome" id="R-CEL-8948751">
    <property type="pathway name" value="Regulation of PTEN stability and activity"/>
</dbReference>
<dbReference type="Reactome" id="R-CEL-8951664">
    <property type="pathway name" value="Neddylation"/>
</dbReference>
<dbReference type="Reactome" id="R-CEL-9755511">
    <property type="pathway name" value="KEAP1-NFE2L2 pathway"/>
</dbReference>
<dbReference type="Reactome" id="R-CEL-9762114">
    <property type="pathway name" value="GSK3B and BTRC:CUL1-mediated-degradation of NFE2L2"/>
</dbReference>
<dbReference type="Reactome" id="R-CEL-983168">
    <property type="pathway name" value="Antigen processing: Ubiquitination &amp; Proteasome degradation"/>
</dbReference>
<dbReference type="Reactome" id="R-CEL-9907900">
    <property type="pathway name" value="Proteasome assembly"/>
</dbReference>
<dbReference type="PRO" id="PR:O17586"/>
<dbReference type="Proteomes" id="UP000001940">
    <property type="component" value="Chromosome V"/>
</dbReference>
<dbReference type="Bgee" id="WBGene00003922">
    <property type="expression patterns" value="Expressed in adult organism and 4 other cell types or tissues"/>
</dbReference>
<dbReference type="GO" id="GO:0005737">
    <property type="term" value="C:cytoplasm"/>
    <property type="evidence" value="ECO:0007669"/>
    <property type="project" value="UniProtKB-SubCell"/>
</dbReference>
<dbReference type="GO" id="GO:0005634">
    <property type="term" value="C:nucleus"/>
    <property type="evidence" value="ECO:0000318"/>
    <property type="project" value="GO_Central"/>
</dbReference>
<dbReference type="GO" id="GO:0019773">
    <property type="term" value="C:proteasome core complex, alpha-subunit complex"/>
    <property type="evidence" value="ECO:0000250"/>
    <property type="project" value="UniProtKB"/>
</dbReference>
<dbReference type="GO" id="GO:0043161">
    <property type="term" value="P:proteasome-mediated ubiquitin-dependent protein catabolic process"/>
    <property type="evidence" value="ECO:0000318"/>
    <property type="project" value="GO_Central"/>
</dbReference>
<dbReference type="CDD" id="cd03754">
    <property type="entry name" value="proteasome_alpha_type_6"/>
    <property type="match status" value="1"/>
</dbReference>
<dbReference type="FunFam" id="3.60.20.10:FF:000072">
    <property type="entry name" value="Proteasome subunit alpha type"/>
    <property type="match status" value="1"/>
</dbReference>
<dbReference type="Gene3D" id="3.60.20.10">
    <property type="entry name" value="Glutamine Phosphoribosylpyrophosphate, subunit 1, domain 1"/>
    <property type="match status" value="1"/>
</dbReference>
<dbReference type="InterPro" id="IPR029055">
    <property type="entry name" value="Ntn_hydrolases_N"/>
</dbReference>
<dbReference type="InterPro" id="IPR050115">
    <property type="entry name" value="Proteasome_alpha"/>
</dbReference>
<dbReference type="InterPro" id="IPR023332">
    <property type="entry name" value="Proteasome_alpha-type"/>
</dbReference>
<dbReference type="InterPro" id="IPR000426">
    <property type="entry name" value="Proteasome_asu_N"/>
</dbReference>
<dbReference type="InterPro" id="IPR001353">
    <property type="entry name" value="Proteasome_sua/b"/>
</dbReference>
<dbReference type="InterPro" id="IPR034642">
    <property type="entry name" value="Proteasome_subunit_alpha6"/>
</dbReference>
<dbReference type="PANTHER" id="PTHR11599">
    <property type="entry name" value="PROTEASOME SUBUNIT ALPHA/BETA"/>
    <property type="match status" value="1"/>
</dbReference>
<dbReference type="Pfam" id="PF00227">
    <property type="entry name" value="Proteasome"/>
    <property type="match status" value="1"/>
</dbReference>
<dbReference type="Pfam" id="PF10584">
    <property type="entry name" value="Proteasome_A_N"/>
    <property type="match status" value="1"/>
</dbReference>
<dbReference type="SMART" id="SM00948">
    <property type="entry name" value="Proteasome_A_N"/>
    <property type="match status" value="1"/>
</dbReference>
<dbReference type="SUPFAM" id="SSF56235">
    <property type="entry name" value="N-terminal nucleophile aminohydrolases (Ntn hydrolases)"/>
    <property type="match status" value="1"/>
</dbReference>
<dbReference type="PROSITE" id="PS00388">
    <property type="entry name" value="PROTEASOME_ALPHA_1"/>
    <property type="match status" value="1"/>
</dbReference>
<dbReference type="PROSITE" id="PS51475">
    <property type="entry name" value="PROTEASOME_ALPHA_2"/>
    <property type="match status" value="1"/>
</dbReference>
<evidence type="ECO:0000250" key="1"/>
<evidence type="ECO:0000255" key="2">
    <source>
        <dbReference type="PROSITE-ProRule" id="PRU00808"/>
    </source>
</evidence>
<reference key="1">
    <citation type="journal article" date="1998" name="Science">
        <title>Genome sequence of the nematode C. elegans: a platform for investigating biology.</title>
        <authorList>
            <consortium name="The C. elegans sequencing consortium"/>
        </authorList>
    </citation>
    <scope>NUCLEOTIDE SEQUENCE [LARGE SCALE GENOMIC DNA]</scope>
    <source>
        <strain>Bristol N2</strain>
    </source>
</reference>
<sequence length="246" mass="27049">MSRGSSAGFDRHITIFSPEGRVYQVEYAFKAINSTNLTAVAVKGADAAVIAVQKRVPDSLIVADTVTSVYQISQSVGCCAIGMIPDAKFQIKRAQGEAASWKYKNGYDMPCELLAKKMADLNQYYTQNAEMRSLGCALLFISYDDEKGPEVYRVDPAGYYRGMKGVSVGVKQLPATSFLEKKIKKKSELTSTEAIELAIEALQTSLGIDVRSKDLEVVVVTKDNSKFTKLTSDQVEHHLNQIANRD</sequence>
<proteinExistence type="evidence at protein level"/>
<name>PSA6_CAEEL</name>
<protein>
    <recommendedName>
        <fullName>Proteasome subunit alpha type-6</fullName>
    </recommendedName>
    <alternativeName>
        <fullName>Proteasome subunit alpha 1</fullName>
    </alternativeName>
</protein>
<gene>
    <name type="primary">pas-1</name>
    <name type="ORF">C15H11.7</name>
</gene>
<comment type="function">
    <text evidence="1">The proteasome is a multicatalytic proteinase complex which is characterized by its ability to cleave peptides with Arg, Phe, Tyr, Leu, and Glu adjacent to the leaving group at neutral or slightly basic pH. The proteasome has an ATP-dependent proteolytic activity (By similarity).</text>
</comment>
<comment type="subunit">
    <text evidence="1">The 26S proteasome consists of a 20S proteasome core and two 19S regulatory subunits. The 20S proteasome core is composed of 28 subunits that are arranged in four stacked rings, resulting in a barrel-shaped structure. The two end rings are each formed by seven alpha subunits, and the two central rings are each formed by seven beta subunits. The catalytic chamber with the active sites is on the inside of the barrel (By similarity).</text>
</comment>
<comment type="interaction">
    <interactant intactId="EBI-315388">
        <id>O17586</id>
    </interactant>
    <interactant intactId="EBI-315406">
        <id>Q09583</id>
        <label>pas-7</label>
    </interactant>
    <organismsDiffer>false</organismsDiffer>
    <experiments>6</experiments>
</comment>
<comment type="subcellular location">
    <subcellularLocation>
        <location evidence="1">Cytoplasm</location>
    </subcellularLocation>
    <subcellularLocation>
        <location evidence="1">Nucleus</location>
    </subcellularLocation>
</comment>
<comment type="similarity">
    <text evidence="2">Belongs to the peptidase T1A family.</text>
</comment>
<keyword id="KW-0963">Cytoplasm</keyword>
<keyword id="KW-0539">Nucleus</keyword>
<keyword id="KW-0647">Proteasome</keyword>
<keyword id="KW-1185">Reference proteome</keyword>
<organism>
    <name type="scientific">Caenorhabditis elegans</name>
    <dbReference type="NCBI Taxonomy" id="6239"/>
    <lineage>
        <taxon>Eukaryota</taxon>
        <taxon>Metazoa</taxon>
        <taxon>Ecdysozoa</taxon>
        <taxon>Nematoda</taxon>
        <taxon>Chromadorea</taxon>
        <taxon>Rhabditida</taxon>
        <taxon>Rhabditina</taxon>
        <taxon>Rhabditomorpha</taxon>
        <taxon>Rhabditoidea</taxon>
        <taxon>Rhabditidae</taxon>
        <taxon>Peloderinae</taxon>
        <taxon>Caenorhabditis</taxon>
    </lineage>
</organism>